<dbReference type="EMBL" id="U46779">
    <property type="protein sequence ID" value="AAA87592.1"/>
    <property type="molecule type" value="mRNA"/>
</dbReference>
<dbReference type="SMR" id="Q60481"/>
<dbReference type="FunCoup" id="Q60481">
    <property type="interactions" value="536"/>
</dbReference>
<dbReference type="STRING" id="10141.ENSCPOP00000015585"/>
<dbReference type="GlyCosmos" id="Q60481">
    <property type="glycosylation" value="5 sites, No reported glycans"/>
</dbReference>
<dbReference type="eggNOG" id="ENOG502TDUI">
    <property type="taxonomic scope" value="Eukaryota"/>
</dbReference>
<dbReference type="InParanoid" id="Q60481"/>
<dbReference type="Proteomes" id="UP000005447">
    <property type="component" value="Unassembled WGS sequence"/>
</dbReference>
<dbReference type="GO" id="GO:0005615">
    <property type="term" value="C:extracellular space"/>
    <property type="evidence" value="ECO:0000250"/>
    <property type="project" value="UniProtKB"/>
</dbReference>
<dbReference type="GO" id="GO:0005125">
    <property type="term" value="F:cytokine activity"/>
    <property type="evidence" value="ECO:0000250"/>
    <property type="project" value="UniProtKB"/>
</dbReference>
<dbReference type="GO" id="GO:0005129">
    <property type="term" value="F:granulocyte macrophage colony-stimulating factor receptor binding"/>
    <property type="evidence" value="ECO:0007669"/>
    <property type="project" value="InterPro"/>
</dbReference>
<dbReference type="GO" id="GO:0008083">
    <property type="term" value="F:growth factor activity"/>
    <property type="evidence" value="ECO:0007669"/>
    <property type="project" value="UniProtKB-KW"/>
</dbReference>
<dbReference type="GO" id="GO:0006955">
    <property type="term" value="P:immune response"/>
    <property type="evidence" value="ECO:0007669"/>
    <property type="project" value="InterPro"/>
</dbReference>
<dbReference type="GO" id="GO:0030099">
    <property type="term" value="P:myeloid cell differentiation"/>
    <property type="evidence" value="ECO:0007669"/>
    <property type="project" value="TreeGrafter"/>
</dbReference>
<dbReference type="CDD" id="cd00040">
    <property type="entry name" value="CSF2"/>
    <property type="match status" value="1"/>
</dbReference>
<dbReference type="Gene3D" id="1.20.1250.10">
    <property type="match status" value="1"/>
</dbReference>
<dbReference type="InterPro" id="IPR009079">
    <property type="entry name" value="4_helix_cytokine-like_core"/>
</dbReference>
<dbReference type="InterPro" id="IPR000773">
    <property type="entry name" value="GM_colony-stim-fac"/>
</dbReference>
<dbReference type="PANTHER" id="PTHR10059:SF0">
    <property type="entry name" value="GRANULOCYTE-MACROPHAGE COLONY-STIMULATING FACTOR"/>
    <property type="match status" value="1"/>
</dbReference>
<dbReference type="PANTHER" id="PTHR10059">
    <property type="entry name" value="GRANULOCYTE-MACROPHAGE COLONY-STIMULATING FACTOR GM-CSF"/>
    <property type="match status" value="1"/>
</dbReference>
<dbReference type="Pfam" id="PF01109">
    <property type="entry name" value="GM_CSF"/>
    <property type="match status" value="1"/>
</dbReference>
<dbReference type="PRINTS" id="PR00693">
    <property type="entry name" value="GMCSFACTOR"/>
</dbReference>
<dbReference type="SMART" id="SM00040">
    <property type="entry name" value="CSF2"/>
    <property type="match status" value="1"/>
</dbReference>
<dbReference type="SUPFAM" id="SSF47266">
    <property type="entry name" value="4-helical cytokines"/>
    <property type="match status" value="1"/>
</dbReference>
<dbReference type="PROSITE" id="PS00702">
    <property type="entry name" value="GM_CSF"/>
    <property type="match status" value="1"/>
</dbReference>
<gene>
    <name type="primary">CSF2</name>
</gene>
<proteinExistence type="evidence at transcript level"/>
<sequence>MWLQNLLLLGTVVCSICAPTDLLSPVTQSWKHVDATINEALSLLNHTSDPAAVMNETVEVVYDQFEPQEPTCLQTRLALFMKGLRGNLTRLEGSLTLMANFYKQHCPPTPETSCMTQIITFKSFKENLKRFLFAIPFDCW</sequence>
<reference key="1">
    <citation type="submission" date="1996-02" db="EMBL/GenBank/DDBJ databases">
        <authorList>
            <person name="Yuan H.T."/>
            <person name="Kelly F.J."/>
            <person name="Bingle C.D."/>
        </authorList>
    </citation>
    <scope>NUCLEOTIDE SEQUENCE [MRNA]</scope>
    <source>
        <strain>Hartley</strain>
        <tissue>Lung</tissue>
    </source>
</reference>
<feature type="signal peptide" evidence="2">
    <location>
        <begin position="1"/>
        <end position="17"/>
    </location>
</feature>
<feature type="chain" id="PRO_0000005862" description="Granulocyte-macrophage colony-stimulating factor">
    <location>
        <begin position="18"/>
        <end position="140" status="greater than"/>
    </location>
</feature>
<feature type="glycosylation site" description="O-linked (GalNAc...) serine" evidence="1">
    <location>
        <position position="24"/>
    </location>
</feature>
<feature type="glycosylation site" description="O-linked (GalNAc...) threonine" evidence="1">
    <location>
        <position position="27"/>
    </location>
</feature>
<feature type="glycosylation site" description="N-linked (GlcNAc...) asparagine" evidence="2">
    <location>
        <position position="45"/>
    </location>
</feature>
<feature type="glycosylation site" description="N-linked (GlcNAc...) asparagine" evidence="2">
    <location>
        <position position="55"/>
    </location>
</feature>
<feature type="glycosylation site" description="N-linked (GlcNAc...) asparagine" evidence="2">
    <location>
        <position position="87"/>
    </location>
</feature>
<feature type="disulfide bond" evidence="1">
    <location>
        <begin position="72"/>
        <end position="114"/>
    </location>
</feature>
<feature type="disulfide bond" evidence="1">
    <location>
        <begin position="106"/>
        <end position="139"/>
    </location>
</feature>
<feature type="non-terminal residue">
    <location>
        <position position="140"/>
    </location>
</feature>
<accession>Q60481</accession>
<keyword id="KW-0202">Cytokine</keyword>
<keyword id="KW-1015">Disulfide bond</keyword>
<keyword id="KW-0325">Glycoprotein</keyword>
<keyword id="KW-0339">Growth factor</keyword>
<keyword id="KW-1185">Reference proteome</keyword>
<keyword id="KW-0964">Secreted</keyword>
<keyword id="KW-0732">Signal</keyword>
<protein>
    <recommendedName>
        <fullName>Granulocyte-macrophage colony-stimulating factor</fullName>
        <shortName>GM-CSF</shortName>
    </recommendedName>
    <alternativeName>
        <fullName>Colony-stimulating factor</fullName>
        <shortName>CSF</shortName>
    </alternativeName>
</protein>
<comment type="function">
    <text evidence="1">Cytokine that stimulates the growth and differentiation of hematopoietic precursor cells from various lineages, including granulocytes, macrophages, eosinophils and erythrocytes.</text>
</comment>
<comment type="subunit">
    <text evidence="1">Monomer. The signaling GM-CSF receptor complex is a dodecamer of two head-to-head hexamers of two alpha, two beta, and two ligand subunits (By similarity).</text>
</comment>
<comment type="subcellular location">
    <subcellularLocation>
        <location>Secreted</location>
    </subcellularLocation>
</comment>
<comment type="similarity">
    <text evidence="3">Belongs to the GM-CSF family.</text>
</comment>
<name>CSF2_CAVPO</name>
<evidence type="ECO:0000250" key="1"/>
<evidence type="ECO:0000255" key="2"/>
<evidence type="ECO:0000305" key="3"/>
<organism>
    <name type="scientific">Cavia porcellus</name>
    <name type="common">Guinea pig</name>
    <dbReference type="NCBI Taxonomy" id="10141"/>
    <lineage>
        <taxon>Eukaryota</taxon>
        <taxon>Metazoa</taxon>
        <taxon>Chordata</taxon>
        <taxon>Craniata</taxon>
        <taxon>Vertebrata</taxon>
        <taxon>Euteleostomi</taxon>
        <taxon>Mammalia</taxon>
        <taxon>Eutheria</taxon>
        <taxon>Euarchontoglires</taxon>
        <taxon>Glires</taxon>
        <taxon>Rodentia</taxon>
        <taxon>Hystricomorpha</taxon>
        <taxon>Caviidae</taxon>
        <taxon>Cavia</taxon>
    </lineage>
</organism>